<keyword id="KW-0021">Allosteric enzyme</keyword>
<keyword id="KW-0067">ATP-binding</keyword>
<keyword id="KW-0963">Cytoplasm</keyword>
<keyword id="KW-0324">Glycolysis</keyword>
<keyword id="KW-0418">Kinase</keyword>
<keyword id="KW-0460">Magnesium</keyword>
<keyword id="KW-0479">Metal-binding</keyword>
<keyword id="KW-0547">Nucleotide-binding</keyword>
<keyword id="KW-0808">Transferase</keyword>
<dbReference type="EC" id="2.7.1.11" evidence="1"/>
<dbReference type="EMBL" id="AE016795">
    <property type="protein sequence ID" value="AAO09713.1"/>
    <property type="molecule type" value="Genomic_DNA"/>
</dbReference>
<dbReference type="RefSeq" id="WP_011079242.1">
    <property type="nucleotide sequence ID" value="NC_004459.3"/>
</dbReference>
<dbReference type="SMR" id="Q8DCY1"/>
<dbReference type="KEGG" id="vvu:VV1_1257"/>
<dbReference type="HOGENOM" id="CLU_020655_0_1_6"/>
<dbReference type="UniPathway" id="UPA00109">
    <property type="reaction ID" value="UER00182"/>
</dbReference>
<dbReference type="Proteomes" id="UP000002275">
    <property type="component" value="Chromosome 1"/>
</dbReference>
<dbReference type="GO" id="GO:0005945">
    <property type="term" value="C:6-phosphofructokinase complex"/>
    <property type="evidence" value="ECO:0007669"/>
    <property type="project" value="TreeGrafter"/>
</dbReference>
<dbReference type="GO" id="GO:0003872">
    <property type="term" value="F:6-phosphofructokinase activity"/>
    <property type="evidence" value="ECO:0007669"/>
    <property type="project" value="UniProtKB-UniRule"/>
</dbReference>
<dbReference type="GO" id="GO:0016208">
    <property type="term" value="F:AMP binding"/>
    <property type="evidence" value="ECO:0007669"/>
    <property type="project" value="TreeGrafter"/>
</dbReference>
<dbReference type="GO" id="GO:0005524">
    <property type="term" value="F:ATP binding"/>
    <property type="evidence" value="ECO:0007669"/>
    <property type="project" value="UniProtKB-KW"/>
</dbReference>
<dbReference type="GO" id="GO:0070095">
    <property type="term" value="F:fructose-6-phosphate binding"/>
    <property type="evidence" value="ECO:0007669"/>
    <property type="project" value="TreeGrafter"/>
</dbReference>
<dbReference type="GO" id="GO:0042802">
    <property type="term" value="F:identical protein binding"/>
    <property type="evidence" value="ECO:0007669"/>
    <property type="project" value="TreeGrafter"/>
</dbReference>
<dbReference type="GO" id="GO:0046872">
    <property type="term" value="F:metal ion binding"/>
    <property type="evidence" value="ECO:0007669"/>
    <property type="project" value="UniProtKB-KW"/>
</dbReference>
<dbReference type="GO" id="GO:0048029">
    <property type="term" value="F:monosaccharide binding"/>
    <property type="evidence" value="ECO:0007669"/>
    <property type="project" value="TreeGrafter"/>
</dbReference>
<dbReference type="GO" id="GO:0061621">
    <property type="term" value="P:canonical glycolysis"/>
    <property type="evidence" value="ECO:0007669"/>
    <property type="project" value="TreeGrafter"/>
</dbReference>
<dbReference type="GO" id="GO:0030388">
    <property type="term" value="P:fructose 1,6-bisphosphate metabolic process"/>
    <property type="evidence" value="ECO:0007669"/>
    <property type="project" value="TreeGrafter"/>
</dbReference>
<dbReference type="GO" id="GO:0006002">
    <property type="term" value="P:fructose 6-phosphate metabolic process"/>
    <property type="evidence" value="ECO:0007669"/>
    <property type="project" value="InterPro"/>
</dbReference>
<dbReference type="CDD" id="cd00763">
    <property type="entry name" value="Bacterial_PFK"/>
    <property type="match status" value="1"/>
</dbReference>
<dbReference type="FunFam" id="3.40.50.450:FF:000001">
    <property type="entry name" value="ATP-dependent 6-phosphofructokinase"/>
    <property type="match status" value="1"/>
</dbReference>
<dbReference type="FunFam" id="3.40.50.460:FF:000002">
    <property type="entry name" value="ATP-dependent 6-phosphofructokinase"/>
    <property type="match status" value="1"/>
</dbReference>
<dbReference type="Gene3D" id="3.40.50.450">
    <property type="match status" value="1"/>
</dbReference>
<dbReference type="Gene3D" id="3.40.50.460">
    <property type="entry name" value="Phosphofructokinase domain"/>
    <property type="match status" value="1"/>
</dbReference>
<dbReference type="HAMAP" id="MF_00339">
    <property type="entry name" value="Phosphofructokinase_I_B1"/>
    <property type="match status" value="1"/>
</dbReference>
<dbReference type="InterPro" id="IPR022953">
    <property type="entry name" value="ATP_PFK"/>
</dbReference>
<dbReference type="InterPro" id="IPR012003">
    <property type="entry name" value="ATP_PFK_prok-type"/>
</dbReference>
<dbReference type="InterPro" id="IPR012828">
    <property type="entry name" value="PFKA_ATP_prok"/>
</dbReference>
<dbReference type="InterPro" id="IPR015912">
    <property type="entry name" value="Phosphofructokinase_CS"/>
</dbReference>
<dbReference type="InterPro" id="IPR000023">
    <property type="entry name" value="Phosphofructokinase_dom"/>
</dbReference>
<dbReference type="InterPro" id="IPR035966">
    <property type="entry name" value="PKF_sf"/>
</dbReference>
<dbReference type="NCBIfam" id="TIGR02482">
    <property type="entry name" value="PFKA_ATP"/>
    <property type="match status" value="1"/>
</dbReference>
<dbReference type="NCBIfam" id="NF002872">
    <property type="entry name" value="PRK03202.1"/>
    <property type="match status" value="1"/>
</dbReference>
<dbReference type="PANTHER" id="PTHR13697:SF4">
    <property type="entry name" value="ATP-DEPENDENT 6-PHOSPHOFRUCTOKINASE"/>
    <property type="match status" value="1"/>
</dbReference>
<dbReference type="PANTHER" id="PTHR13697">
    <property type="entry name" value="PHOSPHOFRUCTOKINASE"/>
    <property type="match status" value="1"/>
</dbReference>
<dbReference type="Pfam" id="PF00365">
    <property type="entry name" value="PFK"/>
    <property type="match status" value="1"/>
</dbReference>
<dbReference type="PIRSF" id="PIRSF000532">
    <property type="entry name" value="ATP_PFK_prok"/>
    <property type="match status" value="1"/>
</dbReference>
<dbReference type="PRINTS" id="PR00476">
    <property type="entry name" value="PHFRCTKINASE"/>
</dbReference>
<dbReference type="SUPFAM" id="SSF53784">
    <property type="entry name" value="Phosphofructokinase"/>
    <property type="match status" value="1"/>
</dbReference>
<dbReference type="PROSITE" id="PS00433">
    <property type="entry name" value="PHOSPHOFRUCTOKINASE"/>
    <property type="match status" value="1"/>
</dbReference>
<gene>
    <name evidence="1" type="primary">pfkA</name>
    <name type="ordered locus">VV1_1257</name>
</gene>
<feature type="chain" id="PRO_0000112007" description="ATP-dependent 6-phosphofructokinase">
    <location>
        <begin position="1"/>
        <end position="320"/>
    </location>
</feature>
<feature type="active site" description="Proton acceptor" evidence="1">
    <location>
        <position position="128"/>
    </location>
</feature>
<feature type="binding site" evidence="1">
    <location>
        <position position="12"/>
    </location>
    <ligand>
        <name>ATP</name>
        <dbReference type="ChEBI" id="CHEBI:30616"/>
    </ligand>
</feature>
<feature type="binding site" evidence="1">
    <location>
        <begin position="22"/>
        <end position="26"/>
    </location>
    <ligand>
        <name>ADP</name>
        <dbReference type="ChEBI" id="CHEBI:456216"/>
        <note>allosteric activator; ligand shared between dimeric partners</note>
    </ligand>
</feature>
<feature type="binding site" evidence="1">
    <location>
        <begin position="73"/>
        <end position="74"/>
    </location>
    <ligand>
        <name>ATP</name>
        <dbReference type="ChEBI" id="CHEBI:30616"/>
    </ligand>
</feature>
<feature type="binding site" evidence="1">
    <location>
        <begin position="103"/>
        <end position="106"/>
    </location>
    <ligand>
        <name>ATP</name>
        <dbReference type="ChEBI" id="CHEBI:30616"/>
    </ligand>
</feature>
<feature type="binding site" evidence="1">
    <location>
        <position position="104"/>
    </location>
    <ligand>
        <name>Mg(2+)</name>
        <dbReference type="ChEBI" id="CHEBI:18420"/>
        <note>catalytic</note>
    </ligand>
</feature>
<feature type="binding site" description="in other chain" evidence="1">
    <location>
        <begin position="126"/>
        <end position="128"/>
    </location>
    <ligand>
        <name>substrate</name>
        <note>ligand shared between dimeric partners</note>
    </ligand>
</feature>
<feature type="binding site" description="in other chain" evidence="1">
    <location>
        <position position="155"/>
    </location>
    <ligand>
        <name>ADP</name>
        <dbReference type="ChEBI" id="CHEBI:456216"/>
        <note>allosteric activator; ligand shared between dimeric partners</note>
    </ligand>
</feature>
<feature type="binding site" evidence="1">
    <location>
        <position position="163"/>
    </location>
    <ligand>
        <name>substrate</name>
        <note>ligand shared between dimeric partners</note>
    </ligand>
</feature>
<feature type="binding site" description="in other chain" evidence="1">
    <location>
        <begin position="170"/>
        <end position="172"/>
    </location>
    <ligand>
        <name>substrate</name>
        <note>ligand shared between dimeric partners</note>
    </ligand>
</feature>
<feature type="binding site" description="in other chain" evidence="1">
    <location>
        <begin position="186"/>
        <end position="188"/>
    </location>
    <ligand>
        <name>ADP</name>
        <dbReference type="ChEBI" id="CHEBI:456216"/>
        <note>allosteric activator; ligand shared between dimeric partners</note>
    </ligand>
</feature>
<feature type="binding site" description="in other chain" evidence="1">
    <location>
        <position position="212"/>
    </location>
    <ligand>
        <name>ADP</name>
        <dbReference type="ChEBI" id="CHEBI:456216"/>
        <note>allosteric activator; ligand shared between dimeric partners</note>
    </ligand>
</feature>
<feature type="binding site" description="in other chain" evidence="1">
    <location>
        <begin position="214"/>
        <end position="216"/>
    </location>
    <ligand>
        <name>ADP</name>
        <dbReference type="ChEBI" id="CHEBI:456216"/>
        <note>allosteric activator; ligand shared between dimeric partners</note>
    </ligand>
</feature>
<feature type="binding site" description="in other chain" evidence="1">
    <location>
        <position position="223"/>
    </location>
    <ligand>
        <name>substrate</name>
        <note>ligand shared between dimeric partners</note>
    </ligand>
</feature>
<feature type="binding site" evidence="1">
    <location>
        <position position="244"/>
    </location>
    <ligand>
        <name>substrate</name>
        <note>ligand shared between dimeric partners</note>
    </ligand>
</feature>
<feature type="binding site" description="in other chain" evidence="1">
    <location>
        <begin position="250"/>
        <end position="253"/>
    </location>
    <ligand>
        <name>substrate</name>
        <note>ligand shared between dimeric partners</note>
    </ligand>
</feature>
<accession>Q8DCY1</accession>
<name>PFKA_VIBVU</name>
<reference key="1">
    <citation type="submission" date="2002-12" db="EMBL/GenBank/DDBJ databases">
        <title>Complete genome sequence of Vibrio vulnificus CMCP6.</title>
        <authorList>
            <person name="Rhee J.H."/>
            <person name="Kim S.Y."/>
            <person name="Chung S.S."/>
            <person name="Kim J.J."/>
            <person name="Moon Y.H."/>
            <person name="Jeong H."/>
            <person name="Choy H.E."/>
        </authorList>
    </citation>
    <scope>NUCLEOTIDE SEQUENCE [LARGE SCALE GENOMIC DNA]</scope>
    <source>
        <strain>CMCP6</strain>
    </source>
</reference>
<sequence>MIKKIGVLTSGGDAPGMNAAIRGVVRTALGAGLEVYGIYDGYLGLYEGRIKQLDRSSVSDVINRGGTFLGSARFPEFKEVAVREKAIENLKAHGIDALVVIGGDGSYMGAKKLTEMGYPCIGLPGTIDNDIAGTDYTIGYLTALNTVIESIDRLRDTSSSHQRISIVEIMGRHCGDLTLMSAIAGGCEYIITPETGLDKEKLIGNIQDGISKGKKHAIIALTELMMDANELAKEIEAGTGRETRATVLGHIQRGGRPTAFDRVLASRMGNYAVHLLMEGHGGRCVGIVKEQLVHHDIIDAIENMKRPVRNDLFKVAEELF</sequence>
<comment type="function">
    <text evidence="1">Catalyzes the phosphorylation of D-fructose 6-phosphate to fructose 1,6-bisphosphate by ATP, the first committing step of glycolysis.</text>
</comment>
<comment type="catalytic activity">
    <reaction evidence="1">
        <text>beta-D-fructose 6-phosphate + ATP = beta-D-fructose 1,6-bisphosphate + ADP + H(+)</text>
        <dbReference type="Rhea" id="RHEA:16109"/>
        <dbReference type="ChEBI" id="CHEBI:15378"/>
        <dbReference type="ChEBI" id="CHEBI:30616"/>
        <dbReference type="ChEBI" id="CHEBI:32966"/>
        <dbReference type="ChEBI" id="CHEBI:57634"/>
        <dbReference type="ChEBI" id="CHEBI:456216"/>
        <dbReference type="EC" id="2.7.1.11"/>
    </reaction>
</comment>
<comment type="cofactor">
    <cofactor evidence="1">
        <name>Mg(2+)</name>
        <dbReference type="ChEBI" id="CHEBI:18420"/>
    </cofactor>
</comment>
<comment type="activity regulation">
    <text evidence="1">Allosterically activated by ADP and other diphosphonucleosides, and allosterically inhibited by phosphoenolpyruvate.</text>
</comment>
<comment type="pathway">
    <text evidence="1">Carbohydrate degradation; glycolysis; D-glyceraldehyde 3-phosphate and glycerone phosphate from D-glucose: step 3/4.</text>
</comment>
<comment type="subunit">
    <text evidence="1">Homotetramer.</text>
</comment>
<comment type="subcellular location">
    <subcellularLocation>
        <location evidence="1">Cytoplasm</location>
    </subcellularLocation>
</comment>
<comment type="similarity">
    <text evidence="1">Belongs to the phosphofructokinase type A (PFKA) family. ATP-dependent PFK group I subfamily. Prokaryotic clade 'B1' sub-subfamily.</text>
</comment>
<evidence type="ECO:0000255" key="1">
    <source>
        <dbReference type="HAMAP-Rule" id="MF_00339"/>
    </source>
</evidence>
<proteinExistence type="inferred from homology"/>
<organism>
    <name type="scientific">Vibrio vulnificus (strain CMCP6)</name>
    <dbReference type="NCBI Taxonomy" id="216895"/>
    <lineage>
        <taxon>Bacteria</taxon>
        <taxon>Pseudomonadati</taxon>
        <taxon>Pseudomonadota</taxon>
        <taxon>Gammaproteobacteria</taxon>
        <taxon>Vibrionales</taxon>
        <taxon>Vibrionaceae</taxon>
        <taxon>Vibrio</taxon>
    </lineage>
</organism>
<protein>
    <recommendedName>
        <fullName evidence="1">ATP-dependent 6-phosphofructokinase</fullName>
        <shortName evidence="1">ATP-PFK</shortName>
        <shortName evidence="1">Phosphofructokinase</shortName>
        <ecNumber evidence="1">2.7.1.11</ecNumber>
    </recommendedName>
    <alternativeName>
        <fullName evidence="1">Phosphohexokinase</fullName>
    </alternativeName>
</protein>